<feature type="chain" id="PRO_0000412283" description="Cbb3-type cytochrome c oxidase subunit CcoP">
    <location>
        <begin position="1"/>
        <end position="296"/>
    </location>
</feature>
<feature type="topological domain" description="Cytoplasmic" evidence="3 7">
    <location>
        <begin position="1"/>
        <end position="31"/>
    </location>
</feature>
<feature type="transmembrane region" description="Helical" evidence="7">
    <location>
        <begin position="32"/>
        <end position="52"/>
    </location>
</feature>
<feature type="topological domain" description="Periplasmic" evidence="3 7">
    <location>
        <begin position="53"/>
        <end position="296"/>
    </location>
</feature>
<feature type="domain" description="Cytochrome c 1" evidence="8">
    <location>
        <begin position="108"/>
        <end position="200"/>
    </location>
</feature>
<feature type="domain" description="Cytochrome c 2" evidence="8">
    <location>
        <begin position="207"/>
        <end position="293"/>
    </location>
</feature>
<feature type="binding site" description="covalent" evidence="2">
    <location>
        <position position="121"/>
    </location>
    <ligand>
        <name>heme c</name>
        <dbReference type="ChEBI" id="CHEBI:61717"/>
        <label>1</label>
    </ligand>
</feature>
<feature type="binding site" description="covalent" evidence="2">
    <location>
        <position position="124"/>
    </location>
    <ligand>
        <name>heme c</name>
        <dbReference type="ChEBI" id="CHEBI:61717"/>
        <label>1</label>
    </ligand>
</feature>
<feature type="binding site" description="axial binding residue" evidence="2">
    <location>
        <position position="125"/>
    </location>
    <ligand>
        <name>heme c</name>
        <dbReference type="ChEBI" id="CHEBI:61717"/>
        <label>1</label>
    </ligand>
    <ligandPart>
        <name>Fe</name>
        <dbReference type="ChEBI" id="CHEBI:18248"/>
    </ligandPart>
</feature>
<feature type="binding site" description="axial binding residue" evidence="2">
    <location>
        <position position="175"/>
    </location>
    <ligand>
        <name>heme c</name>
        <dbReference type="ChEBI" id="CHEBI:61717"/>
        <label>2</label>
    </ligand>
    <ligandPart>
        <name>Fe</name>
        <dbReference type="ChEBI" id="CHEBI:18248"/>
    </ligandPart>
</feature>
<feature type="binding site" description="covalent" evidence="2">
    <location>
        <position position="220"/>
    </location>
    <ligand>
        <name>heme c</name>
        <dbReference type="ChEBI" id="CHEBI:61717"/>
        <label>2</label>
    </ligand>
</feature>
<feature type="binding site" description="covalent" evidence="2">
    <location>
        <position position="223"/>
    </location>
    <ligand>
        <name>heme c</name>
        <dbReference type="ChEBI" id="CHEBI:61717"/>
        <label>2</label>
    </ligand>
</feature>
<feature type="binding site" description="axial binding residue" evidence="2">
    <location>
        <position position="224"/>
    </location>
    <ligand>
        <name>heme c</name>
        <dbReference type="ChEBI" id="CHEBI:61717"/>
        <label>2</label>
    </ligand>
    <ligandPart>
        <name>Fe</name>
        <dbReference type="ChEBI" id="CHEBI:18248"/>
    </ligandPart>
</feature>
<feature type="binding site" description="axial binding residue" evidence="2">
    <location>
        <position position="270"/>
    </location>
    <ligand>
        <name>heme c</name>
        <dbReference type="ChEBI" id="CHEBI:61717"/>
        <label>1</label>
    </ligand>
    <ligandPart>
        <name>Fe</name>
        <dbReference type="ChEBI" id="CHEBI:18248"/>
    </ligandPart>
</feature>
<gene>
    <name evidence="10" type="primary">ccoP</name>
    <name type="ordered locus">AZL_003380</name>
</gene>
<comment type="function">
    <text evidence="1 2 3">C-type cytochrome. Part of the cbb3-type cytochrome c oxidase complex. CcoP subunit is required for transferring electrons from donor cytochrome c via its heme groups to CcoO subunit. From there, electrons are shuttled to the catalytic binuclear center of CcoN subunit where oxygen reduction takes place. The complex also functions as a proton pump (By similarity).</text>
</comment>
<comment type="cofactor">
    <cofactor evidence="2 6">
        <name>heme c</name>
        <dbReference type="ChEBI" id="CHEBI:61717"/>
    </cofactor>
    <text evidence="2 6">Binds 2 heme C groups per subunit.</text>
</comment>
<comment type="pathway">
    <text evidence="1">Energy metabolism; oxidative phosphorylation.</text>
</comment>
<comment type="subunit">
    <text evidence="1">Component of the cbb3-type cytochrome c oxidase at least composed of CcoN, CcoO, CcoQ and CcoP.</text>
</comment>
<comment type="subcellular location">
    <subcellularLocation>
        <location evidence="5 7">Cell inner membrane</location>
        <topology evidence="5 7">Single-pass membrane protein</topology>
    </subcellularLocation>
</comment>
<comment type="similarity">
    <text evidence="9">Belongs to the CcoP / FixP family.</text>
</comment>
<keyword id="KW-0997">Cell inner membrane</keyword>
<keyword id="KW-1003">Cell membrane</keyword>
<keyword id="KW-0249">Electron transport</keyword>
<keyword id="KW-0349">Heme</keyword>
<keyword id="KW-0375">Hydrogen ion transport</keyword>
<keyword id="KW-0406">Ion transport</keyword>
<keyword id="KW-0408">Iron</keyword>
<keyword id="KW-0472">Membrane</keyword>
<keyword id="KW-0479">Metal-binding</keyword>
<keyword id="KW-0560">Oxidoreductase</keyword>
<keyword id="KW-1185">Reference proteome</keyword>
<keyword id="KW-0677">Repeat</keyword>
<keyword id="KW-0679">Respiratory chain</keyword>
<keyword id="KW-0812">Transmembrane</keyword>
<keyword id="KW-1133">Transmembrane helix</keyword>
<keyword id="KW-0813">Transport</keyword>
<evidence type="ECO:0000250" key="1">
    <source>
        <dbReference type="UniProtKB" id="D5ARP7"/>
    </source>
</evidence>
<evidence type="ECO:0000250" key="2">
    <source>
        <dbReference type="UniProtKB" id="D9IA45"/>
    </source>
</evidence>
<evidence type="ECO:0000250" key="3">
    <source>
        <dbReference type="UniProtKB" id="Q3J015"/>
    </source>
</evidence>
<evidence type="ECO:0000250" key="4">
    <source>
        <dbReference type="UniProtKB" id="Q52689"/>
    </source>
</evidence>
<evidence type="ECO:0000250" key="5">
    <source>
        <dbReference type="UniProtKB" id="Q8KS19"/>
    </source>
</evidence>
<evidence type="ECO:0000250" key="6">
    <source>
        <dbReference type="UniProtKB" id="Q9ZHR4"/>
    </source>
</evidence>
<evidence type="ECO:0000255" key="7"/>
<evidence type="ECO:0000255" key="8">
    <source>
        <dbReference type="PROSITE-ProRule" id="PRU00433"/>
    </source>
</evidence>
<evidence type="ECO:0000305" key="9"/>
<evidence type="ECO:0000312" key="10">
    <source>
        <dbReference type="EMBL" id="BAI70976.1"/>
    </source>
</evidence>
<proteinExistence type="inferred from homology"/>
<name>CCOP_AZOS1</name>
<dbReference type="EMBL" id="AP010946">
    <property type="protein sequence ID" value="BAI70976.1"/>
    <property type="molecule type" value="Genomic_DNA"/>
</dbReference>
<dbReference type="RefSeq" id="WP_012972964.1">
    <property type="nucleotide sequence ID" value="NC_013854.1"/>
</dbReference>
<dbReference type="SMR" id="D3NRE7"/>
<dbReference type="STRING" id="137722.AZL_003380"/>
<dbReference type="KEGG" id="azl:AZL_003380"/>
<dbReference type="HOGENOM" id="CLU_047545_2_0_5"/>
<dbReference type="OrthoDB" id="9811281at2"/>
<dbReference type="UniPathway" id="UPA00705"/>
<dbReference type="Proteomes" id="UP000002040">
    <property type="component" value="Chromosome"/>
</dbReference>
<dbReference type="GO" id="GO:0005886">
    <property type="term" value="C:plasma membrane"/>
    <property type="evidence" value="ECO:0007669"/>
    <property type="project" value="UniProtKB-SubCell"/>
</dbReference>
<dbReference type="GO" id="GO:0009055">
    <property type="term" value="F:electron transfer activity"/>
    <property type="evidence" value="ECO:0007669"/>
    <property type="project" value="InterPro"/>
</dbReference>
<dbReference type="GO" id="GO:0020037">
    <property type="term" value="F:heme binding"/>
    <property type="evidence" value="ECO:0007669"/>
    <property type="project" value="InterPro"/>
</dbReference>
<dbReference type="GO" id="GO:0005506">
    <property type="term" value="F:iron ion binding"/>
    <property type="evidence" value="ECO:0007669"/>
    <property type="project" value="InterPro"/>
</dbReference>
<dbReference type="GO" id="GO:0016491">
    <property type="term" value="F:oxidoreductase activity"/>
    <property type="evidence" value="ECO:0007669"/>
    <property type="project" value="UniProtKB-KW"/>
</dbReference>
<dbReference type="GO" id="GO:0006119">
    <property type="term" value="P:oxidative phosphorylation"/>
    <property type="evidence" value="ECO:0007669"/>
    <property type="project" value="UniProtKB-UniPathway"/>
</dbReference>
<dbReference type="GO" id="GO:1902600">
    <property type="term" value="P:proton transmembrane transport"/>
    <property type="evidence" value="ECO:0007669"/>
    <property type="project" value="UniProtKB-KW"/>
</dbReference>
<dbReference type="Gene3D" id="6.10.280.130">
    <property type="match status" value="1"/>
</dbReference>
<dbReference type="Gene3D" id="1.10.760.10">
    <property type="entry name" value="Cytochrome c-like domain"/>
    <property type="match status" value="2"/>
</dbReference>
<dbReference type="InterPro" id="IPR032858">
    <property type="entry name" value="CcoP_N"/>
</dbReference>
<dbReference type="InterPro" id="IPR038414">
    <property type="entry name" value="CcoP_N_sf"/>
</dbReference>
<dbReference type="InterPro" id="IPR009056">
    <property type="entry name" value="Cyt_c-like_dom"/>
</dbReference>
<dbReference type="InterPro" id="IPR036909">
    <property type="entry name" value="Cyt_c-like_dom_sf"/>
</dbReference>
<dbReference type="InterPro" id="IPR008168">
    <property type="entry name" value="Cyt_C_IC"/>
</dbReference>
<dbReference type="InterPro" id="IPR004678">
    <property type="entry name" value="Cyt_c_oxidase_cbb3_su3"/>
</dbReference>
<dbReference type="InterPro" id="IPR050597">
    <property type="entry name" value="Cytochrome_c_Oxidase_Subunit"/>
</dbReference>
<dbReference type="NCBIfam" id="TIGR00782">
    <property type="entry name" value="ccoP"/>
    <property type="match status" value="1"/>
</dbReference>
<dbReference type="PANTHER" id="PTHR33751">
    <property type="entry name" value="CBB3-TYPE CYTOCHROME C OXIDASE SUBUNIT FIXP"/>
    <property type="match status" value="1"/>
</dbReference>
<dbReference type="PANTHER" id="PTHR33751:SF1">
    <property type="entry name" value="CBB3-TYPE CYTOCHROME C OXIDASE SUBUNIT FIXP"/>
    <property type="match status" value="1"/>
</dbReference>
<dbReference type="Pfam" id="PF00034">
    <property type="entry name" value="Cytochrom_C"/>
    <property type="match status" value="1"/>
</dbReference>
<dbReference type="Pfam" id="PF13442">
    <property type="entry name" value="Cytochrome_CBB3"/>
    <property type="match status" value="1"/>
</dbReference>
<dbReference type="Pfam" id="PF14715">
    <property type="entry name" value="FixP_N"/>
    <property type="match status" value="1"/>
</dbReference>
<dbReference type="PIRSF" id="PIRSF000006">
    <property type="entry name" value="Cbb3-Cox_fixP"/>
    <property type="match status" value="1"/>
</dbReference>
<dbReference type="PRINTS" id="PR00605">
    <property type="entry name" value="CYTCHROMECIC"/>
</dbReference>
<dbReference type="SUPFAM" id="SSF46626">
    <property type="entry name" value="Cytochrome c"/>
    <property type="match status" value="2"/>
</dbReference>
<dbReference type="PROSITE" id="PS51007">
    <property type="entry name" value="CYTC"/>
    <property type="match status" value="2"/>
</dbReference>
<accession>D3NRE7</accession>
<reference evidence="10" key="1">
    <citation type="journal article" date="2010" name="DNA Res.">
        <title>Complete genomic structure of the cultivated rice endophyte Azospirillum sp. B510.</title>
        <authorList>
            <person name="Kaneko T."/>
            <person name="Minamisawa K."/>
            <person name="Isawa T."/>
            <person name="Nakatsukasa H."/>
            <person name="Mitsui H."/>
            <person name="Kawaharada Y."/>
            <person name="Nakamura Y."/>
            <person name="Watanabe A."/>
            <person name="Kawashima K."/>
            <person name="Ono A."/>
            <person name="Shimizu Y."/>
            <person name="Takahashi C."/>
            <person name="Minami C."/>
            <person name="Fujishiro T."/>
            <person name="Kohara M."/>
            <person name="Katoh M."/>
            <person name="Nakazaki N."/>
            <person name="Nakayama S."/>
            <person name="Yamada M."/>
            <person name="Tabata S."/>
            <person name="Sato S."/>
        </authorList>
    </citation>
    <scope>NUCLEOTIDE SEQUENCE [LARGE SCALE GENOMIC DNA]</scope>
    <source>
        <strain evidence="10">B510</strain>
    </source>
</reference>
<sequence>MAQNYKDELSGVETTGHEWDGLRELNNPLPKWWLYLFYVCIAWAMVYYVFYPAWPLGKTYTKGILGYSQREELDSKLAEAKAGQAKYLTAIAAKSVDEIQKDKDLLGFAMAGGRSYFNENCAACHGAGGQGAKGFPTLADDVWLWGGTSADIYKTIQHGIRSDDGDTRGTPGTGMTAFGKDGILTRDQIDQVTDYVLSLNGKAADAGKVAKGKTVYDENCAACHGDTAQGALAAGVDGVGAPPLKQANWLYGGDKATLVETVTNGRAGVMPAWSKRLDDATIKSLAVYVHNLGGGK</sequence>
<protein>
    <recommendedName>
        <fullName evidence="1">Cbb3-type cytochrome c oxidase subunit CcoP</fullName>
        <shortName evidence="1">Cbb3-Cox subunit CcoP</shortName>
    </recommendedName>
    <alternativeName>
        <fullName evidence="4">C-type cytochrome CcoP</fullName>
        <shortName evidence="1">Cyt c(P)</shortName>
    </alternativeName>
    <alternativeName>
        <fullName evidence="10">Cytochrome c oxidase subunit III</fullName>
    </alternativeName>
</protein>
<organism>
    <name type="scientific">Azospirillum sp. (strain B510)</name>
    <dbReference type="NCBI Taxonomy" id="137722"/>
    <lineage>
        <taxon>Bacteria</taxon>
        <taxon>Pseudomonadati</taxon>
        <taxon>Pseudomonadota</taxon>
        <taxon>Alphaproteobacteria</taxon>
        <taxon>Rhodospirillales</taxon>
        <taxon>Azospirillaceae</taxon>
        <taxon>Azospirillum</taxon>
    </lineage>
</organism>